<dbReference type="EMBL" id="CP000970">
    <property type="protein sequence ID" value="ACB16853.1"/>
    <property type="molecule type" value="Genomic_DNA"/>
</dbReference>
<dbReference type="RefSeq" id="WP_000867217.1">
    <property type="nucleotide sequence ID" value="NC_010498.1"/>
</dbReference>
<dbReference type="SMR" id="B1LQQ6"/>
<dbReference type="GeneID" id="93775233"/>
<dbReference type="KEGG" id="ecm:EcSMS35_1232"/>
<dbReference type="HOGENOM" id="CLU_189289_0_0_6"/>
<dbReference type="Proteomes" id="UP000007011">
    <property type="component" value="Chromosome"/>
</dbReference>
<dbReference type="HAMAP" id="MF_01549">
    <property type="entry name" value="DsrB"/>
    <property type="match status" value="1"/>
</dbReference>
<dbReference type="InterPro" id="IPR019717">
    <property type="entry name" value="Dextransucrase_DSRB"/>
</dbReference>
<dbReference type="NCBIfam" id="NF007981">
    <property type="entry name" value="PRK10708.1"/>
    <property type="match status" value="1"/>
</dbReference>
<dbReference type="Pfam" id="PF10781">
    <property type="entry name" value="DSRB"/>
    <property type="match status" value="1"/>
</dbReference>
<sequence>MKVNDRVTVKTDGGPRRPGVVLAVEEFSEGTMYLVSLEDYPLGIWFFNEAGHQDGIFVEKAE</sequence>
<evidence type="ECO:0000255" key="1">
    <source>
        <dbReference type="HAMAP-Rule" id="MF_01549"/>
    </source>
</evidence>
<proteinExistence type="inferred from homology"/>
<protein>
    <recommendedName>
        <fullName evidence="1">Protein DsrB</fullName>
    </recommendedName>
</protein>
<name>DSRB_ECOSM</name>
<organism>
    <name type="scientific">Escherichia coli (strain SMS-3-5 / SECEC)</name>
    <dbReference type="NCBI Taxonomy" id="439855"/>
    <lineage>
        <taxon>Bacteria</taxon>
        <taxon>Pseudomonadati</taxon>
        <taxon>Pseudomonadota</taxon>
        <taxon>Gammaproteobacteria</taxon>
        <taxon>Enterobacterales</taxon>
        <taxon>Enterobacteriaceae</taxon>
        <taxon>Escherichia</taxon>
    </lineage>
</organism>
<feature type="chain" id="PRO_1000146853" description="Protein DsrB">
    <location>
        <begin position="1"/>
        <end position="62"/>
    </location>
</feature>
<gene>
    <name evidence="1" type="primary">dsrB</name>
    <name type="ordered locus">EcSMS35_1232</name>
</gene>
<accession>B1LQQ6</accession>
<comment type="similarity">
    <text evidence="1">Belongs to the DsrB family.</text>
</comment>
<reference key="1">
    <citation type="journal article" date="2008" name="J. Bacteriol.">
        <title>Insights into the environmental resistance gene pool from the genome sequence of the multidrug-resistant environmental isolate Escherichia coli SMS-3-5.</title>
        <authorList>
            <person name="Fricke W.F."/>
            <person name="Wright M.S."/>
            <person name="Lindell A.H."/>
            <person name="Harkins D.M."/>
            <person name="Baker-Austin C."/>
            <person name="Ravel J."/>
            <person name="Stepanauskas R."/>
        </authorList>
    </citation>
    <scope>NUCLEOTIDE SEQUENCE [LARGE SCALE GENOMIC DNA]</scope>
    <source>
        <strain>SMS-3-5 / SECEC</strain>
    </source>
</reference>